<reference key="1">
    <citation type="journal article" date="1993" name="J. Biol. Chem.">
        <title>cDNA cloning of PG-M, a large chondroitin sulfate proteoglycan expressed during chondrogenesis in chick limb buds. Alternative spliced multiforms of PG-M and their relationships to versican.</title>
        <authorList>
            <person name="Shinomura T."/>
            <person name="Nishida Y."/>
            <person name="Ito K."/>
            <person name="Kimata K."/>
        </authorList>
    </citation>
    <scope>NUCLEOTIDE SEQUENCE [MRNA] (ISOFORMS V0 AND V1)</scope>
    <source>
        <strain>White leghorn</strain>
        <tissue>Limb bud</tissue>
    </source>
</reference>
<gene>
    <name type="primary">VCAN</name>
    <name type="synonym">CSPG2</name>
</gene>
<organism>
    <name type="scientific">Gallus gallus</name>
    <name type="common">Chicken</name>
    <dbReference type="NCBI Taxonomy" id="9031"/>
    <lineage>
        <taxon>Eukaryota</taxon>
        <taxon>Metazoa</taxon>
        <taxon>Chordata</taxon>
        <taxon>Craniata</taxon>
        <taxon>Vertebrata</taxon>
        <taxon>Euteleostomi</taxon>
        <taxon>Archelosauria</taxon>
        <taxon>Archosauria</taxon>
        <taxon>Dinosauria</taxon>
        <taxon>Saurischia</taxon>
        <taxon>Theropoda</taxon>
        <taxon>Coelurosauria</taxon>
        <taxon>Aves</taxon>
        <taxon>Neognathae</taxon>
        <taxon>Galloanserae</taxon>
        <taxon>Galliformes</taxon>
        <taxon>Phasianidae</taxon>
        <taxon>Phasianinae</taxon>
        <taxon>Gallus</taxon>
    </lineage>
</organism>
<proteinExistence type="evidence at transcript level"/>
<accession>Q90953</accession>
<accession>Q90945</accession>
<evidence type="ECO:0000250" key="1"/>
<evidence type="ECO:0000250" key="2">
    <source>
        <dbReference type="UniProtKB" id="P13611"/>
    </source>
</evidence>
<evidence type="ECO:0000255" key="3"/>
<evidence type="ECO:0000255" key="4">
    <source>
        <dbReference type="PROSITE-ProRule" id="PRU00040"/>
    </source>
</evidence>
<evidence type="ECO:0000255" key="5">
    <source>
        <dbReference type="PROSITE-ProRule" id="PRU00076"/>
    </source>
</evidence>
<evidence type="ECO:0000255" key="6">
    <source>
        <dbReference type="PROSITE-ProRule" id="PRU00302"/>
    </source>
</evidence>
<evidence type="ECO:0000255" key="7">
    <source>
        <dbReference type="PROSITE-ProRule" id="PRU00323"/>
    </source>
</evidence>
<evidence type="ECO:0000256" key="8">
    <source>
        <dbReference type="SAM" id="MobiDB-lite"/>
    </source>
</evidence>
<evidence type="ECO:0000303" key="9">
    <source>
    </source>
</evidence>
<comment type="function">
    <text>May play a role in intercellular signaling and in connecting cells with the extracellular matrix. May take part in the regulation of cell motility, growth and differentiation. Binds hyaluronic acid.</text>
</comment>
<comment type="subcellular location">
    <subcellularLocation>
        <location evidence="2">Secreted</location>
        <location evidence="2">Extracellular space</location>
        <location evidence="2">Extracellular matrix</location>
    </subcellularLocation>
    <subcellularLocation>
        <location evidence="2">Cell projection</location>
        <location evidence="2">Cilium</location>
        <location evidence="2">Photoreceptor outer segment</location>
    </subcellularLocation>
    <subcellularLocation>
        <location evidence="2">Secreted</location>
        <location evidence="2">Extracellular space</location>
        <location evidence="2">Extracellular matrix</location>
        <location evidence="2">Interphotoreceptor matrix</location>
    </subcellularLocation>
</comment>
<comment type="alternative products">
    <event type="alternative splicing"/>
    <isoform>
        <id>Q90953-1</id>
        <name>V0</name>
        <sequence type="displayed"/>
    </isoform>
    <isoform>
        <id>Q90953-2</id>
        <name>V1</name>
        <sequence type="described" ref="VSP_003093"/>
    </isoform>
    <text>Additional isoforms seem to exist.</text>
</comment>
<comment type="tissue specificity">
    <text>Prechondrogenic condensation area of developing limb buds.</text>
</comment>
<comment type="developmental stage">
    <text>Disappears after the cartilage development.</text>
</comment>
<feature type="signal peptide" evidence="3">
    <location>
        <begin position="1"/>
        <end position="26"/>
    </location>
</feature>
<feature type="chain" id="PRO_0000017525" description="Versican core protein">
    <location>
        <begin position="27"/>
        <end position="3562"/>
    </location>
</feature>
<feature type="domain" description="Ig-like V-type">
    <location>
        <begin position="27"/>
        <end position="143"/>
    </location>
</feature>
<feature type="domain" description="Link 1" evidence="7">
    <location>
        <begin position="149"/>
        <end position="244"/>
    </location>
</feature>
<feature type="domain" description="Link 2" evidence="7">
    <location>
        <begin position="250"/>
        <end position="346"/>
    </location>
</feature>
<feature type="domain" description="EGF-like 1" evidence="5">
    <location>
        <begin position="3254"/>
        <end position="3290"/>
    </location>
</feature>
<feature type="domain" description="EGF-like 2; calcium-binding" evidence="5">
    <location>
        <begin position="3292"/>
        <end position="3328"/>
    </location>
</feature>
<feature type="domain" description="C-type lectin" evidence="4">
    <location>
        <begin position="3341"/>
        <end position="3455"/>
    </location>
</feature>
<feature type="domain" description="Sushi" evidence="6">
    <location>
        <begin position="3459"/>
        <end position="3519"/>
    </location>
</feature>
<feature type="region of interest" description="Disordered" evidence="8">
    <location>
        <begin position="466"/>
        <end position="490"/>
    </location>
</feature>
<feature type="region of interest" description="Disordered" evidence="8">
    <location>
        <begin position="509"/>
        <end position="530"/>
    </location>
</feature>
<feature type="region of interest" description="Disordered" evidence="8">
    <location>
        <begin position="951"/>
        <end position="1020"/>
    </location>
</feature>
<feature type="region of interest" description="Disordered" evidence="8">
    <location>
        <begin position="1167"/>
        <end position="1187"/>
    </location>
</feature>
<feature type="region of interest" description="Disordered" evidence="8">
    <location>
        <begin position="1207"/>
        <end position="1237"/>
    </location>
</feature>
<feature type="region of interest" description="Disordered" evidence="8">
    <location>
        <begin position="1856"/>
        <end position="1875"/>
    </location>
</feature>
<feature type="region of interest" description="Disordered" evidence="8">
    <location>
        <begin position="2030"/>
        <end position="2059"/>
    </location>
</feature>
<feature type="region of interest" description="Disordered" evidence="8">
    <location>
        <begin position="2463"/>
        <end position="2482"/>
    </location>
</feature>
<feature type="region of interest" description="Disordered" evidence="8">
    <location>
        <begin position="2496"/>
        <end position="2521"/>
    </location>
</feature>
<feature type="region of interest" description="Disordered" evidence="8">
    <location>
        <begin position="2918"/>
        <end position="2947"/>
    </location>
</feature>
<feature type="region of interest" description="Disordered" evidence="8">
    <location>
        <begin position="2984"/>
        <end position="3006"/>
    </location>
</feature>
<feature type="region of interest" description="Disordered" evidence="8">
    <location>
        <begin position="3108"/>
        <end position="3144"/>
    </location>
</feature>
<feature type="compositionally biased region" description="Polar residues" evidence="8">
    <location>
        <begin position="975"/>
        <end position="996"/>
    </location>
</feature>
<feature type="compositionally biased region" description="Basic and acidic residues" evidence="8">
    <location>
        <begin position="997"/>
        <end position="1011"/>
    </location>
</feature>
<feature type="compositionally biased region" description="Basic and acidic residues" evidence="8">
    <location>
        <begin position="2496"/>
        <end position="2506"/>
    </location>
</feature>
<feature type="compositionally biased region" description="Low complexity" evidence="8">
    <location>
        <begin position="2918"/>
        <end position="2927"/>
    </location>
</feature>
<feature type="compositionally biased region" description="Basic and acidic residues" evidence="8">
    <location>
        <begin position="2988"/>
        <end position="3005"/>
    </location>
</feature>
<feature type="compositionally biased region" description="Basic and acidic residues" evidence="8">
    <location>
        <begin position="3108"/>
        <end position="3129"/>
    </location>
</feature>
<feature type="glycosylation site" description="N-linked (GlcNAc...) asparagine" evidence="3">
    <location>
        <position position="163"/>
    </location>
</feature>
<feature type="glycosylation site" description="N-linked (GlcNAc...) asparagine" evidence="3">
    <location>
        <position position="235"/>
    </location>
</feature>
<feature type="glycosylation site" description="N-linked (GlcNAc...) asparagine" evidence="3">
    <location>
        <position position="329"/>
    </location>
</feature>
<feature type="glycosylation site" description="N-linked (GlcNAc...) asparagine" evidence="3">
    <location>
        <position position="529"/>
    </location>
</feature>
<feature type="glycosylation site" description="N-linked (GlcNAc...) asparagine" evidence="3">
    <location>
        <position position="709"/>
    </location>
</feature>
<feature type="glycosylation site" description="O-linked (Xyl...) (chondroitin sulfate) serine" evidence="2">
    <location>
        <position position="723"/>
    </location>
</feature>
<feature type="glycosylation site" description="N-linked (GlcNAc...) asparagine" evidence="3">
    <location>
        <position position="948"/>
    </location>
</feature>
<feature type="glycosylation site" description="N-linked (GlcNAc...) asparagine" evidence="3">
    <location>
        <position position="1409"/>
    </location>
</feature>
<feature type="glycosylation site" description="N-linked (GlcNAc...) asparagine" evidence="3">
    <location>
        <position position="1479"/>
    </location>
</feature>
<feature type="glycosylation site" description="N-linked (GlcNAc...) asparagine" evidence="3">
    <location>
        <position position="1523"/>
    </location>
</feature>
<feature type="glycosylation site" description="N-linked (GlcNAc...) asparagine" evidence="3">
    <location>
        <position position="1530"/>
    </location>
</feature>
<feature type="glycosylation site" description="N-linked (GlcNAc...) asparagine" evidence="3">
    <location>
        <position position="1625"/>
    </location>
</feature>
<feature type="glycosylation site" description="O-linked (Xyl...) (chondroitin sulfate) serine" evidence="2">
    <location>
        <position position="1628"/>
    </location>
</feature>
<feature type="glycosylation site" description="N-linked (GlcNAc...) asparagine" evidence="3">
    <location>
        <position position="1751"/>
    </location>
</feature>
<feature type="glycosylation site" description="N-linked (GlcNAc...) asparagine" evidence="3">
    <location>
        <position position="1988"/>
    </location>
</feature>
<feature type="glycosylation site" description="O-linked (Xyl...) (chondroitin sulfate) serine" evidence="2">
    <location>
        <position position="2082"/>
    </location>
</feature>
<feature type="glycosylation site" description="N-linked (GlcNAc...) asparagine" evidence="3">
    <location>
        <position position="2088"/>
    </location>
</feature>
<feature type="glycosylation site" description="N-linked (GlcNAc...) asparagine" evidence="3">
    <location>
        <position position="2089"/>
    </location>
</feature>
<feature type="glycosylation site" description="O-linked (Xyl...) (chondroitin sulfate) serine" evidence="2">
    <location>
        <position position="2386"/>
    </location>
</feature>
<feature type="glycosylation site" description="N-linked (GlcNAc...) asparagine" evidence="3">
    <location>
        <position position="2507"/>
    </location>
</feature>
<feature type="glycosylation site" description="N-linked (GlcNAc...) asparagine" evidence="3">
    <location>
        <position position="2642"/>
    </location>
</feature>
<feature type="glycosylation site" description="N-linked (GlcNAc...) asparagine" evidence="3">
    <location>
        <position position="2679"/>
    </location>
</feature>
<feature type="glycosylation site" description="N-linked (GlcNAc...) asparagine" evidence="3">
    <location>
        <position position="2748"/>
    </location>
</feature>
<feature type="glycosylation site" description="N-linked (GlcNAc...) asparagine" evidence="3">
    <location>
        <position position="2762"/>
    </location>
</feature>
<feature type="glycosylation site" description="N-linked (GlcNAc...) asparagine" evidence="3">
    <location>
        <position position="3069"/>
    </location>
</feature>
<feature type="glycosylation site" description="N-linked (GlcNAc...) asparagine" evidence="3">
    <location>
        <position position="3194"/>
    </location>
</feature>
<feature type="glycosylation site" description="N-linked (GlcNAc...) asparagine" evidence="3">
    <location>
        <position position="3232"/>
    </location>
</feature>
<feature type="glycosylation site" description="N-linked (GlcNAc...) asparagine" evidence="3">
    <location>
        <position position="3545"/>
    </location>
</feature>
<feature type="disulfide bond" evidence="1">
    <location>
        <begin position="44"/>
        <end position="129"/>
    </location>
</feature>
<feature type="disulfide bond" evidence="1">
    <location>
        <begin position="171"/>
        <end position="242"/>
    </location>
</feature>
<feature type="disulfide bond" evidence="1">
    <location>
        <begin position="195"/>
        <end position="216"/>
    </location>
</feature>
<feature type="disulfide bond" evidence="1">
    <location>
        <begin position="269"/>
        <end position="344"/>
    </location>
</feature>
<feature type="disulfide bond" evidence="1">
    <location>
        <begin position="293"/>
        <end position="314"/>
    </location>
</feature>
<feature type="disulfide bond" evidence="1">
    <location>
        <begin position="3258"/>
        <end position="3269"/>
    </location>
</feature>
<feature type="disulfide bond" evidence="1">
    <location>
        <begin position="3263"/>
        <end position="3278"/>
    </location>
</feature>
<feature type="disulfide bond" evidence="1">
    <location>
        <begin position="3280"/>
        <end position="3289"/>
    </location>
</feature>
<feature type="disulfide bond" evidence="1">
    <location>
        <begin position="3296"/>
        <end position="3307"/>
    </location>
</feature>
<feature type="disulfide bond" evidence="1">
    <location>
        <begin position="3301"/>
        <end position="3316"/>
    </location>
</feature>
<feature type="disulfide bond" evidence="1">
    <location>
        <begin position="3318"/>
        <end position="3327"/>
    </location>
</feature>
<feature type="disulfide bond" evidence="1">
    <location>
        <begin position="3334"/>
        <end position="3345"/>
    </location>
</feature>
<feature type="disulfide bond" evidence="1">
    <location>
        <begin position="3362"/>
        <end position="3454"/>
    </location>
</feature>
<feature type="disulfide bond" evidence="1">
    <location>
        <begin position="3430"/>
        <end position="3446"/>
    </location>
</feature>
<feature type="disulfide bond" evidence="1">
    <location>
        <begin position="3461"/>
        <end position="3504"/>
    </location>
</feature>
<feature type="disulfide bond" evidence="1">
    <location>
        <begin position="3490"/>
        <end position="3517"/>
    </location>
</feature>
<feature type="splice variant" id="VSP_003093" description="In isoform V1." evidence="9">
    <location>
        <begin position="485"/>
        <end position="1411"/>
    </location>
</feature>
<sequence length="3562" mass="388083">MLLNIKSIIWMCSTLAITYMLPKVKAEKKTLVKGSLSGTSVLPCFFSTTPTIASSYAAEYLRIKWSKVELDKSGKDAKETTVLVAQNGNIKIGQNYKDRVSVPTHSEETGDASLTFSRLRASDAGVYRCDVMYGVEDTQGIVSLAVDGVVFHYRAATSRYTLNFTQAQQTCLDNGAVIASPEQLKAAYEDGFEQCDAGWLSDQTVRYPIRHPRIGCFGDKMGKKGVRTYGRRFPNETYDVYCYVEHMQDEVVHVSVPEKLTFEEAKELCRKRDGVLASVGNMYVAWRNGFDQCDYGWLADGSVRYPASVARPQCGGGLLGVRTLYRYENQTGFPYPDSKFDAYCYERKKIVSEPTTVKLVTTLKTDSVELSSAKVTLKPSVFESSVTEVAVTKTKVPAWEEATLETEDTKMTTEVAEEKREMEVLMENIKLTTLLPQTVTDGEISPYDTLGRTEYDVSPRLTESTSAALEVEHTYSEAELSEEQGRSESTEDAFLTSVVFQDSTAVAKSSTGSWEDIETGDTQKHDGDNQTEQIEVGPVMTATDSLVPASQRELPRTGSSVSLTKENLYLGSHSTKEPTKKSMEAKSDKKLTTVVIPKALFTDQYDLTTGGEGRESMYTVMPDRVSGVALVSIPESDVPAVSETLMDELAVTTGQSSTADESTPFIKFSSSATELDNEASAEGSREDLKDVHLTTSSGIPVSFTLFTANETGSEVTALSESTSAPQKFEEGITSVLHSSQQTEGSAILEKQEKTKEPEMSTIDAKVLYITTVVPASVTAGSEGRFGSEKFTHTPPVSGMWLQTDKDQVYMTEETSHTKRIELDTEDDISGMEPTSSPGQIIEYTKHLGAPVSAVTDETKTSMETAETESDEEVVSADFDQTKGTTEVFHTSSSLDLEKFTLSKIPEDESSATVKSFSSSSGTVLPTAVATVLEVTDHEADETSGYVLNMTFSTPEGEQRKATEKSPATSAEDEVSTGTEISKYTMTEGGQISSVTSAEKESVAALQEREEQPSVGLPETKEPFKFTDVTEIETTVPQREGDTSLVPVTVGSEDIGEMQVTDHTSFDSIIHTEATVTSTKASEVFPKELSTKDQDRELGTAMGSTLPVTSVQMHEQKTTAGFESPQTTTQEKHDEMGSAYDEMYPATELSVPALMLTEYGQVSGPVETSTRSLHLTGTPKAETATDQEEKITEAVPVTFGTQAKVYESKGTTTREEDRDVGSWNSVLPPHTMLSSPSTAGSISLLTLGASPSQTPEGSGISEELEEVKTVPFSSRATDKTTVISDLTTSSISAVDKIQPTSASKPFVSSKSPRIIPEEDEEVTSSDIIVIDESISPSKASAEDDLTGKMVEPEIDKEYFTSSTATAVARPTAPPTVMEATEALQPQEVSPTSHPDSGTDIRLYVIQITGNDTDHPVNEFLDLFSRHILPHAVDETHTDAESAQTEPCTSDSVQDSSEYIILDPFFPNFMDFEEEEEDCENTTDVTTPPALQFINGKQQVTSAPKSTKAEEARSDQIESVAHSKNVTFSQINETNTFIISETEASGTMQPSKAGEVMGAFEVTQPTADVAMLEPVYSGESEVTTTDKYLEITSVYEQSPKKNKETVMWHGTEESSTKDTKNLLLITNESSGDGSTESDLSRSVFTEILTMSSHEDSEKISHTTSVPTILSVERSAVTAAPSADSDTATVGIDVKDLIPKGGTATPGNYYKSTIKLDAEFPFESNPEATSHTTKPDMTASSFIVLEGSGDVEENSTLASAMTTETAVAETLSVQDTSLGSGTVLPTEISVTISEITPALPGGTRILYSTFDQSSEATVSTNFVSELIMEQVVGSSVATEKKVEDEKEVQTTVYSSQEISTTDAKGKSELDEFGSTTNEVRTVSQEPTPLREIVPITGTMHSEIKKVTATPFLREKLFINEGSAEEPADLFAGSPTRKVVSTDSPFTDSGSGDIDVITESATLTSVPSRSVIETQTVKHEGNINVISVSLKNTTTEYEEHIGTGGPVTSVSSTGSDGLTEESEVAIEMSENVFSTENQGEPTQEAVPTYTAPSDIKSRLGSRREVTSHVTPVIRTKDLETAEVTSSPESVVNNSTLDTMVTHGTIRAVAESTESKKGKGSFSAVSLGKILMIEHGSGEELKVDSSTTKLMSNGPTEKLLGSHFSFFDQGSGEAETLTESFTKASVSPTGKPEPQEQYGRKTVSMPSAVVHAYTAEPNELVTSTEHDITSLQTVTDTEMEEKAANELTVTSFATNLPLSEDVHSWEDRPREILPKAIESSGEATEDPFFISTQANHEHVEFLSVPTIRPHSEENKVEAESDEKILLPFNNDRVTESAVIERKYLSSPFTDTEQEEELVQNIFPTEDIPRLFLTPKEEKPTNNELISDPLFSGQGSGDEFTVIPSVESLAVKETTNTLSPWPFHPASVGPKLSTDKTQVFESGSTDSNAEINEEITTTAAELTETAYSMATSSPALEEESSSHSNSKDKDITHYFLVIEDPYNKEMDHRRGENGTSRPLPTPGDVSLEESSHMLTTDDVTPVSVILSETPYLEMGKSLATSATKMPSRVLPESSGEGSGWDGVSDSFAPDTLTHSTAPSVMEVELTASSHIPGVYSEVMTTHVPGDGSQTVITGLASLFTEEKEIVANRTAADPKTGTSEELTSDTGMSLDIIPVVDDRRHVTLNVSVYGDITLIEERLQIPSEKTTIIDMDHSKSMPEDIISVQTMPNLVIRSTQVSDDNMKAEEDKYDSILNFSTVEENSFGSGDNLSLTTSIQPSSESVTAGHGPKLVDKDLGSGYAMQFATETLTTTVLNELGIFLPTVPSLVSPHMPHESKESEFEAKHIGRTSTTDDVYEPYTSANNQVITDQSKTMSISGFSGMGQEESGDKKPMIPSLTPDLTMETEKALTTDTFDVSMVTTQSMSQHATVSSSSSEEKHSTVYMQTKSASTEYEETDSVSLNSVSQNPKSSVTVWLVNGVSKYPEVIIPSTSSAKDSDQSDHSSDGTFKEVSSDMAATYKPPTTDLDTTVSSLLVFSPEPESESISTESTPHFNKFVTERSEETESSVNDLIIEENATVSGDSPSIHDYPTAFWNFGERTSTDVPKLSTIEVEFSSERVKNPSQESDRSTERERPRLSSAPVSDSPNSIEVGVFKPDQEAVTMLTSSLEPLDRSLETQSALLGPLLGQQEITTISSNIATNNTAPGNNPYSNEQSTISSELLNTIELVTSSFSLPEVTNGSDFLIGTSVGSVEGTAVQIPGQDPCKSNPCLNGGTCYPRGSFYICTCLPGFNGEQCELDIDECQSNPCRNGATCIDGLNTFTCLCLPSYIGALCEQDTETCDYGWHKFQGQCYKYFAHRRTWDTAERECRLQGAHLTSILSHEEQVFVNRIGHDYQWIGLNDKMFERDFRWTDGSPLQYENWRPNQPDSFFSAGEDCVVIIWHENGQWNDVPCNYHLTYTCKKGTVACGQPPVVENAKTFGKMKPRYEINSLIRYHCKDGFIQRHIPTIRCQGNGRWDMPKITCMNPSTYQRTYSKKYYYKHSSSGKGTSLNSSKHYHRWIRTWQDSRR</sequence>
<protein>
    <recommendedName>
        <fullName>Versican core protein</fullName>
    </recommendedName>
    <alternativeName>
        <fullName>Chondroitin sulfate proteoglycan core protein 2</fullName>
        <shortName>Chondroitin sulfate proteoglycan 2</shortName>
    </alternativeName>
    <alternativeName>
        <fullName>Large fibroblast proteoglycan</fullName>
    </alternativeName>
    <alternativeName>
        <fullName>PG-M</fullName>
    </alternativeName>
</protein>
<dbReference type="EMBL" id="X60226">
    <property type="protein sequence ID" value="CAA42787.1"/>
    <property type="molecule type" value="mRNA"/>
</dbReference>
<dbReference type="EMBL" id="D13542">
    <property type="protein sequence ID" value="BAA02742.1"/>
    <property type="molecule type" value="mRNA"/>
</dbReference>
<dbReference type="PIR" id="A47171">
    <property type="entry name" value="A47171"/>
</dbReference>
<dbReference type="RefSeq" id="NP_990118.1">
    <molecule id="Q90953-1"/>
    <property type="nucleotide sequence ID" value="NM_204787.1"/>
</dbReference>
<dbReference type="SMR" id="Q90953"/>
<dbReference type="FunCoup" id="Q90953">
    <property type="interactions" value="513"/>
</dbReference>
<dbReference type="STRING" id="9031.ENSGALP00000025144"/>
<dbReference type="GlyCosmos" id="Q90953">
    <property type="glycosylation" value="24 sites, No reported glycans"/>
</dbReference>
<dbReference type="GlyGen" id="Q90953">
    <property type="glycosylation" value="31 sites"/>
</dbReference>
<dbReference type="PaxDb" id="9031-ENSGALP00000025144"/>
<dbReference type="GeneID" id="395565"/>
<dbReference type="KEGG" id="gga:395565"/>
<dbReference type="CTD" id="1462"/>
<dbReference type="VEuPathDB" id="HostDB:geneid_395565"/>
<dbReference type="eggNOG" id="ENOG502QRBE">
    <property type="taxonomic scope" value="Eukaryota"/>
</dbReference>
<dbReference type="InParanoid" id="Q90953"/>
<dbReference type="OrthoDB" id="9905227at2759"/>
<dbReference type="PhylomeDB" id="Q90953"/>
<dbReference type="PRO" id="PR:Q90953"/>
<dbReference type="Proteomes" id="UP000000539">
    <property type="component" value="Unassembled WGS sequence"/>
</dbReference>
<dbReference type="GO" id="GO:0005615">
    <property type="term" value="C:extracellular space"/>
    <property type="evidence" value="ECO:0000318"/>
    <property type="project" value="GO_Central"/>
</dbReference>
<dbReference type="GO" id="GO:0033165">
    <property type="term" value="C:interphotoreceptor matrix"/>
    <property type="evidence" value="ECO:0007669"/>
    <property type="project" value="UniProtKB-SubCell"/>
</dbReference>
<dbReference type="GO" id="GO:0072534">
    <property type="term" value="C:perineuronal net"/>
    <property type="evidence" value="ECO:0000318"/>
    <property type="project" value="GO_Central"/>
</dbReference>
<dbReference type="GO" id="GO:0001750">
    <property type="term" value="C:photoreceptor outer segment"/>
    <property type="evidence" value="ECO:0007669"/>
    <property type="project" value="UniProtKB-SubCell"/>
</dbReference>
<dbReference type="GO" id="GO:0045202">
    <property type="term" value="C:synapse"/>
    <property type="evidence" value="ECO:0000318"/>
    <property type="project" value="GO_Central"/>
</dbReference>
<dbReference type="GO" id="GO:0005509">
    <property type="term" value="F:calcium ion binding"/>
    <property type="evidence" value="ECO:0007669"/>
    <property type="project" value="InterPro"/>
</dbReference>
<dbReference type="GO" id="GO:0030246">
    <property type="term" value="F:carbohydrate binding"/>
    <property type="evidence" value="ECO:0007669"/>
    <property type="project" value="UniProtKB-KW"/>
</dbReference>
<dbReference type="GO" id="GO:0005540">
    <property type="term" value="F:hyaluronic acid binding"/>
    <property type="evidence" value="ECO:0007669"/>
    <property type="project" value="UniProtKB-KW"/>
</dbReference>
<dbReference type="GO" id="GO:0007155">
    <property type="term" value="P:cell adhesion"/>
    <property type="evidence" value="ECO:0007669"/>
    <property type="project" value="InterPro"/>
</dbReference>
<dbReference type="GO" id="GO:0007417">
    <property type="term" value="P:central nervous system development"/>
    <property type="evidence" value="ECO:0000318"/>
    <property type="project" value="GO_Central"/>
</dbReference>
<dbReference type="GO" id="GO:0001501">
    <property type="term" value="P:skeletal system development"/>
    <property type="evidence" value="ECO:0000318"/>
    <property type="project" value="GO_Central"/>
</dbReference>
<dbReference type="CDD" id="cd00033">
    <property type="entry name" value="CCP"/>
    <property type="match status" value="1"/>
</dbReference>
<dbReference type="CDD" id="cd03588">
    <property type="entry name" value="CLECT_CSPGs"/>
    <property type="match status" value="1"/>
</dbReference>
<dbReference type="CDD" id="cd00054">
    <property type="entry name" value="EGF_CA"/>
    <property type="match status" value="2"/>
</dbReference>
<dbReference type="CDD" id="cd03517">
    <property type="entry name" value="Link_domain_CSPGs_modules_1_3"/>
    <property type="match status" value="1"/>
</dbReference>
<dbReference type="CDD" id="cd03520">
    <property type="entry name" value="Link_domain_CSPGs_modules_2_4"/>
    <property type="match status" value="1"/>
</dbReference>
<dbReference type="FunFam" id="3.10.100.10:FF:000011">
    <property type="entry name" value="Aggrecan core protein"/>
    <property type="match status" value="1"/>
</dbReference>
<dbReference type="FunFam" id="3.10.100.10:FF:000002">
    <property type="entry name" value="Hyaluronan proteoglycan link protein 1"/>
    <property type="match status" value="1"/>
</dbReference>
<dbReference type="FunFam" id="2.10.70.10:FF:000003">
    <property type="entry name" value="Versican core protein"/>
    <property type="match status" value="1"/>
</dbReference>
<dbReference type="FunFam" id="3.10.100.10:FF:000003">
    <property type="entry name" value="Versican core protein"/>
    <property type="match status" value="1"/>
</dbReference>
<dbReference type="FunFam" id="2.10.25.10:FF:000195">
    <property type="entry name" value="versican core protein-like"/>
    <property type="match status" value="1"/>
</dbReference>
<dbReference type="FunFam" id="2.60.40.10:FF:000361">
    <property type="entry name" value="versican core protein-like"/>
    <property type="match status" value="1"/>
</dbReference>
<dbReference type="FunFam" id="2.10.25.10:FF:000006">
    <property type="entry name" value="Versican core protein-like isoform 1"/>
    <property type="match status" value="1"/>
</dbReference>
<dbReference type="Gene3D" id="2.10.70.10">
    <property type="entry name" value="Complement Module, domain 1"/>
    <property type="match status" value="1"/>
</dbReference>
<dbReference type="Gene3D" id="2.60.40.10">
    <property type="entry name" value="Immunoglobulins"/>
    <property type="match status" value="1"/>
</dbReference>
<dbReference type="Gene3D" id="2.10.25.10">
    <property type="entry name" value="Laminin"/>
    <property type="match status" value="2"/>
</dbReference>
<dbReference type="Gene3D" id="3.10.100.10">
    <property type="entry name" value="Mannose-Binding Protein A, subunit A"/>
    <property type="match status" value="3"/>
</dbReference>
<dbReference type="InterPro" id="IPR001304">
    <property type="entry name" value="C-type_lectin-like"/>
</dbReference>
<dbReference type="InterPro" id="IPR016186">
    <property type="entry name" value="C-type_lectin-like/link_sf"/>
</dbReference>
<dbReference type="InterPro" id="IPR018378">
    <property type="entry name" value="C-type_lectin_CS"/>
</dbReference>
<dbReference type="InterPro" id="IPR033987">
    <property type="entry name" value="CSPG_CTLD"/>
</dbReference>
<dbReference type="InterPro" id="IPR016187">
    <property type="entry name" value="CTDL_fold"/>
</dbReference>
<dbReference type="InterPro" id="IPR001881">
    <property type="entry name" value="EGF-like_Ca-bd_dom"/>
</dbReference>
<dbReference type="InterPro" id="IPR000742">
    <property type="entry name" value="EGF-like_dom"/>
</dbReference>
<dbReference type="InterPro" id="IPR000152">
    <property type="entry name" value="EGF-type_Asp/Asn_hydroxyl_site"/>
</dbReference>
<dbReference type="InterPro" id="IPR018097">
    <property type="entry name" value="EGF_Ca-bd_CS"/>
</dbReference>
<dbReference type="InterPro" id="IPR050691">
    <property type="entry name" value="Hyaluronan_bind_Proteoglycan"/>
</dbReference>
<dbReference type="InterPro" id="IPR007110">
    <property type="entry name" value="Ig-like_dom"/>
</dbReference>
<dbReference type="InterPro" id="IPR036179">
    <property type="entry name" value="Ig-like_dom_sf"/>
</dbReference>
<dbReference type="InterPro" id="IPR013783">
    <property type="entry name" value="Ig-like_fold"/>
</dbReference>
<dbReference type="InterPro" id="IPR003599">
    <property type="entry name" value="Ig_sub"/>
</dbReference>
<dbReference type="InterPro" id="IPR013106">
    <property type="entry name" value="Ig_V-set"/>
</dbReference>
<dbReference type="InterPro" id="IPR000538">
    <property type="entry name" value="Link_dom"/>
</dbReference>
<dbReference type="InterPro" id="IPR035976">
    <property type="entry name" value="Sushi/SCR/CCP_sf"/>
</dbReference>
<dbReference type="InterPro" id="IPR000436">
    <property type="entry name" value="Sushi_SCR_CCP_dom"/>
</dbReference>
<dbReference type="PANTHER" id="PTHR22804">
    <property type="entry name" value="AGGRECAN/VERSICAN PROTEOGLYCAN"/>
    <property type="match status" value="1"/>
</dbReference>
<dbReference type="PANTHER" id="PTHR22804:SF6">
    <property type="entry name" value="VERSICAN CORE PROTEIN"/>
    <property type="match status" value="1"/>
</dbReference>
<dbReference type="Pfam" id="PF00008">
    <property type="entry name" value="EGF"/>
    <property type="match status" value="2"/>
</dbReference>
<dbReference type="Pfam" id="PF00059">
    <property type="entry name" value="Lectin_C"/>
    <property type="match status" value="1"/>
</dbReference>
<dbReference type="Pfam" id="PF00084">
    <property type="entry name" value="Sushi"/>
    <property type="match status" value="1"/>
</dbReference>
<dbReference type="Pfam" id="PF07686">
    <property type="entry name" value="V-set"/>
    <property type="match status" value="1"/>
</dbReference>
<dbReference type="Pfam" id="PF00193">
    <property type="entry name" value="Xlink"/>
    <property type="match status" value="2"/>
</dbReference>
<dbReference type="PRINTS" id="PR01265">
    <property type="entry name" value="LINKMODULE"/>
</dbReference>
<dbReference type="SMART" id="SM00032">
    <property type="entry name" value="CCP"/>
    <property type="match status" value="1"/>
</dbReference>
<dbReference type="SMART" id="SM00034">
    <property type="entry name" value="CLECT"/>
    <property type="match status" value="1"/>
</dbReference>
<dbReference type="SMART" id="SM00181">
    <property type="entry name" value="EGF"/>
    <property type="match status" value="2"/>
</dbReference>
<dbReference type="SMART" id="SM00179">
    <property type="entry name" value="EGF_CA"/>
    <property type="match status" value="2"/>
</dbReference>
<dbReference type="SMART" id="SM00409">
    <property type="entry name" value="IG"/>
    <property type="match status" value="1"/>
</dbReference>
<dbReference type="SMART" id="SM00406">
    <property type="entry name" value="IGv"/>
    <property type="match status" value="1"/>
</dbReference>
<dbReference type="SMART" id="SM00445">
    <property type="entry name" value="LINK"/>
    <property type="match status" value="2"/>
</dbReference>
<dbReference type="SUPFAM" id="SSF56436">
    <property type="entry name" value="C-type lectin-like"/>
    <property type="match status" value="3"/>
</dbReference>
<dbReference type="SUPFAM" id="SSF57535">
    <property type="entry name" value="Complement control module/SCR domain"/>
    <property type="match status" value="1"/>
</dbReference>
<dbReference type="SUPFAM" id="SSF57196">
    <property type="entry name" value="EGF/Laminin"/>
    <property type="match status" value="1"/>
</dbReference>
<dbReference type="SUPFAM" id="SSF48726">
    <property type="entry name" value="Immunoglobulin"/>
    <property type="match status" value="1"/>
</dbReference>
<dbReference type="PROSITE" id="PS00010">
    <property type="entry name" value="ASX_HYDROXYL"/>
    <property type="match status" value="1"/>
</dbReference>
<dbReference type="PROSITE" id="PS00615">
    <property type="entry name" value="C_TYPE_LECTIN_1"/>
    <property type="match status" value="1"/>
</dbReference>
<dbReference type="PROSITE" id="PS50041">
    <property type="entry name" value="C_TYPE_LECTIN_2"/>
    <property type="match status" value="1"/>
</dbReference>
<dbReference type="PROSITE" id="PS00022">
    <property type="entry name" value="EGF_1"/>
    <property type="match status" value="2"/>
</dbReference>
<dbReference type="PROSITE" id="PS01186">
    <property type="entry name" value="EGF_2"/>
    <property type="match status" value="1"/>
</dbReference>
<dbReference type="PROSITE" id="PS50026">
    <property type="entry name" value="EGF_3"/>
    <property type="match status" value="2"/>
</dbReference>
<dbReference type="PROSITE" id="PS01187">
    <property type="entry name" value="EGF_CA"/>
    <property type="match status" value="1"/>
</dbReference>
<dbReference type="PROSITE" id="PS50835">
    <property type="entry name" value="IG_LIKE"/>
    <property type="match status" value="1"/>
</dbReference>
<dbReference type="PROSITE" id="PS01241">
    <property type="entry name" value="LINK_1"/>
    <property type="match status" value="2"/>
</dbReference>
<dbReference type="PROSITE" id="PS50963">
    <property type="entry name" value="LINK_2"/>
    <property type="match status" value="2"/>
</dbReference>
<dbReference type="PROSITE" id="PS50923">
    <property type="entry name" value="SUSHI"/>
    <property type="match status" value="1"/>
</dbReference>
<name>CSPG2_CHICK</name>
<keyword id="KW-0025">Alternative splicing</keyword>
<keyword id="KW-0106">Calcium</keyword>
<keyword id="KW-0966">Cell projection</keyword>
<keyword id="KW-1015">Disulfide bond</keyword>
<keyword id="KW-0245">EGF-like domain</keyword>
<keyword id="KW-0272">Extracellular matrix</keyword>
<keyword id="KW-0325">Glycoprotein</keyword>
<keyword id="KW-0373">Hyaluronic acid</keyword>
<keyword id="KW-0393">Immunoglobulin domain</keyword>
<keyword id="KW-0430">Lectin</keyword>
<keyword id="KW-0654">Proteoglycan</keyword>
<keyword id="KW-1185">Reference proteome</keyword>
<keyword id="KW-0677">Repeat</keyword>
<keyword id="KW-0964">Secreted</keyword>
<keyword id="KW-0732">Signal</keyword>
<keyword id="KW-0768">Sushi</keyword>